<keyword id="KW-0687">Ribonucleoprotein</keyword>
<keyword id="KW-0689">Ribosomal protein</keyword>
<keyword id="KW-0694">RNA-binding</keyword>
<keyword id="KW-0699">rRNA-binding</keyword>
<protein>
    <recommendedName>
        <fullName evidence="1">Small ribosomal subunit protein uS11</fullName>
    </recommendedName>
    <alternativeName>
        <fullName evidence="2">30S ribosomal protein S11</fullName>
    </alternativeName>
</protein>
<gene>
    <name evidence="1" type="primary">rpsK</name>
    <name type="ordered locus">SeSA_A3613</name>
</gene>
<proteinExistence type="inferred from homology"/>
<comment type="function">
    <text evidence="1">Located on the platform of the 30S subunit, it bridges several disparate RNA helices of the 16S rRNA. Forms part of the Shine-Dalgarno cleft in the 70S ribosome.</text>
</comment>
<comment type="subunit">
    <text evidence="1">Part of the 30S ribosomal subunit. Interacts with proteins S7 and S18. Binds to IF-3.</text>
</comment>
<comment type="similarity">
    <text evidence="1">Belongs to the universal ribosomal protein uS11 family.</text>
</comment>
<evidence type="ECO:0000255" key="1">
    <source>
        <dbReference type="HAMAP-Rule" id="MF_01310"/>
    </source>
</evidence>
<evidence type="ECO:0000305" key="2"/>
<dbReference type="EMBL" id="CP001127">
    <property type="protein sequence ID" value="ACF90523.1"/>
    <property type="molecule type" value="Genomic_DNA"/>
</dbReference>
<dbReference type="RefSeq" id="WP_001029758.1">
    <property type="nucleotide sequence ID" value="NC_011094.1"/>
</dbReference>
<dbReference type="SMR" id="B4TXC0"/>
<dbReference type="GeneID" id="98390419"/>
<dbReference type="KEGG" id="sew:SeSA_A3613"/>
<dbReference type="HOGENOM" id="CLU_072439_5_0_6"/>
<dbReference type="Proteomes" id="UP000001865">
    <property type="component" value="Chromosome"/>
</dbReference>
<dbReference type="GO" id="GO:1990904">
    <property type="term" value="C:ribonucleoprotein complex"/>
    <property type="evidence" value="ECO:0007669"/>
    <property type="project" value="UniProtKB-KW"/>
</dbReference>
<dbReference type="GO" id="GO:0005840">
    <property type="term" value="C:ribosome"/>
    <property type="evidence" value="ECO:0007669"/>
    <property type="project" value="UniProtKB-KW"/>
</dbReference>
<dbReference type="GO" id="GO:0019843">
    <property type="term" value="F:rRNA binding"/>
    <property type="evidence" value="ECO:0007669"/>
    <property type="project" value="UniProtKB-UniRule"/>
</dbReference>
<dbReference type="GO" id="GO:0003735">
    <property type="term" value="F:structural constituent of ribosome"/>
    <property type="evidence" value="ECO:0007669"/>
    <property type="project" value="InterPro"/>
</dbReference>
<dbReference type="GO" id="GO:0006412">
    <property type="term" value="P:translation"/>
    <property type="evidence" value="ECO:0007669"/>
    <property type="project" value="UniProtKB-UniRule"/>
</dbReference>
<dbReference type="FunFam" id="3.30.420.80:FF:000001">
    <property type="entry name" value="30S ribosomal protein S11"/>
    <property type="match status" value="1"/>
</dbReference>
<dbReference type="Gene3D" id="3.30.420.80">
    <property type="entry name" value="Ribosomal protein S11"/>
    <property type="match status" value="1"/>
</dbReference>
<dbReference type="HAMAP" id="MF_01310">
    <property type="entry name" value="Ribosomal_uS11"/>
    <property type="match status" value="1"/>
</dbReference>
<dbReference type="InterPro" id="IPR001971">
    <property type="entry name" value="Ribosomal_uS11"/>
</dbReference>
<dbReference type="InterPro" id="IPR019981">
    <property type="entry name" value="Ribosomal_uS11_bac-type"/>
</dbReference>
<dbReference type="InterPro" id="IPR018102">
    <property type="entry name" value="Ribosomal_uS11_CS"/>
</dbReference>
<dbReference type="InterPro" id="IPR036967">
    <property type="entry name" value="Ribosomal_uS11_sf"/>
</dbReference>
<dbReference type="NCBIfam" id="NF003698">
    <property type="entry name" value="PRK05309.1"/>
    <property type="match status" value="1"/>
</dbReference>
<dbReference type="NCBIfam" id="TIGR03632">
    <property type="entry name" value="uS11_bact"/>
    <property type="match status" value="1"/>
</dbReference>
<dbReference type="PANTHER" id="PTHR11759">
    <property type="entry name" value="40S RIBOSOMAL PROTEIN S14/30S RIBOSOMAL PROTEIN S11"/>
    <property type="match status" value="1"/>
</dbReference>
<dbReference type="Pfam" id="PF00411">
    <property type="entry name" value="Ribosomal_S11"/>
    <property type="match status" value="1"/>
</dbReference>
<dbReference type="PIRSF" id="PIRSF002131">
    <property type="entry name" value="Ribosomal_S11"/>
    <property type="match status" value="1"/>
</dbReference>
<dbReference type="SUPFAM" id="SSF53137">
    <property type="entry name" value="Translational machinery components"/>
    <property type="match status" value="1"/>
</dbReference>
<dbReference type="PROSITE" id="PS00054">
    <property type="entry name" value="RIBOSOMAL_S11"/>
    <property type="match status" value="1"/>
</dbReference>
<organism>
    <name type="scientific">Salmonella schwarzengrund (strain CVM19633)</name>
    <dbReference type="NCBI Taxonomy" id="439843"/>
    <lineage>
        <taxon>Bacteria</taxon>
        <taxon>Pseudomonadati</taxon>
        <taxon>Pseudomonadota</taxon>
        <taxon>Gammaproteobacteria</taxon>
        <taxon>Enterobacterales</taxon>
        <taxon>Enterobacteriaceae</taxon>
        <taxon>Salmonella</taxon>
    </lineage>
</organism>
<reference key="1">
    <citation type="journal article" date="2011" name="J. Bacteriol.">
        <title>Comparative genomics of 28 Salmonella enterica isolates: evidence for CRISPR-mediated adaptive sublineage evolution.</title>
        <authorList>
            <person name="Fricke W.F."/>
            <person name="Mammel M.K."/>
            <person name="McDermott P.F."/>
            <person name="Tartera C."/>
            <person name="White D.G."/>
            <person name="Leclerc J.E."/>
            <person name="Ravel J."/>
            <person name="Cebula T.A."/>
        </authorList>
    </citation>
    <scope>NUCLEOTIDE SEQUENCE [LARGE SCALE GENOMIC DNA]</scope>
    <source>
        <strain>CVM19633</strain>
    </source>
</reference>
<feature type="chain" id="PRO_1000141138" description="Small ribosomal subunit protein uS11">
    <location>
        <begin position="1"/>
        <end position="129"/>
    </location>
</feature>
<accession>B4TXC0</accession>
<sequence>MAKAPVRARKRVRKQVSDGVAHIHASFNNTIVTITDRQGNALGWATAGGSGFRGSRKSTPFAAQVAAERCADAVKEYGIKNLEVMVKGPGPGRESTIRALNAAGFRITNITDVTPIPHNGCRPPKKRRV</sequence>
<name>RS11_SALSV</name>